<reference key="1">
    <citation type="journal article" date="1989" name="Mol. Microbiol.">
        <title>Structural and functional analysis of the mini-circle, a transposable element of Streptomyces coelicolor A3(2).</title>
        <authorList>
            <person name="Henderson D.J."/>
            <person name="Lydiate D.J."/>
            <person name="Hopwood D.A."/>
        </authorList>
    </citation>
    <scope>NUCLEOTIDE SEQUENCE [GENOMIC DNA]</scope>
    <source>
        <strain>A3(2) / NRRL B-16638</strain>
    </source>
</reference>
<reference key="2">
    <citation type="journal article" date="2002" name="Nature">
        <title>Complete genome sequence of the model actinomycete Streptomyces coelicolor A3(2).</title>
        <authorList>
            <person name="Bentley S.D."/>
            <person name="Chater K.F."/>
            <person name="Cerdeno-Tarraga A.-M."/>
            <person name="Challis G.L."/>
            <person name="Thomson N.R."/>
            <person name="James K.D."/>
            <person name="Harris D.E."/>
            <person name="Quail M.A."/>
            <person name="Kieser H."/>
            <person name="Harper D."/>
            <person name="Bateman A."/>
            <person name="Brown S."/>
            <person name="Chandra G."/>
            <person name="Chen C.W."/>
            <person name="Collins M."/>
            <person name="Cronin A."/>
            <person name="Fraser A."/>
            <person name="Goble A."/>
            <person name="Hidalgo J."/>
            <person name="Hornsby T."/>
            <person name="Howarth S."/>
            <person name="Huang C.-H."/>
            <person name="Kieser T."/>
            <person name="Larke L."/>
            <person name="Murphy L.D."/>
            <person name="Oliver K."/>
            <person name="O'Neil S."/>
            <person name="Rabbinowitsch E."/>
            <person name="Rajandream M.A."/>
            <person name="Rutherford K.M."/>
            <person name="Rutter S."/>
            <person name="Seeger K."/>
            <person name="Saunders D."/>
            <person name="Sharp S."/>
            <person name="Squares R."/>
            <person name="Squares S."/>
            <person name="Taylor K."/>
            <person name="Warren T."/>
            <person name="Wietzorrek A."/>
            <person name="Woodward J.R."/>
            <person name="Barrell B.G."/>
            <person name="Parkhill J."/>
            <person name="Hopwood D.A."/>
        </authorList>
    </citation>
    <scope>NUCLEOTIDE SEQUENCE [LARGE SCALE GENOMIC DNA]</scope>
    <source>
        <strain>ATCC BAA-471 / A3(2) / M145</strain>
    </source>
</reference>
<proteinExistence type="predicted"/>
<protein>
    <recommendedName>
        <fullName>Mini-circle putative transposase for IS117</fullName>
    </recommendedName>
</protein>
<accession>P14707</accession>
<organism>
    <name type="scientific">Streptomyces coelicolor (strain ATCC BAA-471 / A3(2) / M145)</name>
    <dbReference type="NCBI Taxonomy" id="100226"/>
    <lineage>
        <taxon>Bacteria</taxon>
        <taxon>Bacillati</taxon>
        <taxon>Actinomycetota</taxon>
        <taxon>Actinomycetes</taxon>
        <taxon>Kitasatosporales</taxon>
        <taxon>Streptomycetaceae</taxon>
        <taxon>Streptomyces</taxon>
        <taxon>Streptomyces albidoflavus group</taxon>
    </lineage>
</organism>
<dbReference type="EMBL" id="X15942">
    <property type="protein sequence ID" value="CAA34069.1"/>
    <property type="molecule type" value="Genomic_DNA"/>
</dbReference>
<dbReference type="EMBL" id="AL939109">
    <property type="protein sequence ID" value="CAA20814.1"/>
    <property type="molecule type" value="Genomic_DNA"/>
</dbReference>
<dbReference type="EMBL" id="AL939127">
    <property type="protein sequence ID" value="CAA19611.1"/>
    <property type="molecule type" value="Genomic_DNA"/>
</dbReference>
<dbReference type="PIR" id="S06729">
    <property type="entry name" value="S06729"/>
</dbReference>
<dbReference type="RefSeq" id="NP_625879.1">
    <property type="nucleotide sequence ID" value="NC_003888.3"/>
</dbReference>
<dbReference type="RefSeq" id="NP_630487.1">
    <property type="nucleotide sequence ID" value="NC_003888.3"/>
</dbReference>
<dbReference type="RefSeq" id="WP_011027876.1">
    <property type="nucleotide sequence ID" value="NZ_VNID01000049.1"/>
</dbReference>
<dbReference type="STRING" id="100226.gene:17759196"/>
<dbReference type="PaxDb" id="100226-SCO1603"/>
<dbReference type="KEGG" id="sco:SCO1603"/>
<dbReference type="KEGG" id="sco:SCO6400"/>
<dbReference type="PATRIC" id="fig|100226.15.peg.1615"/>
<dbReference type="eggNOG" id="COG3547">
    <property type="taxonomic scope" value="Bacteria"/>
</dbReference>
<dbReference type="HOGENOM" id="CLU_036902_0_0_11"/>
<dbReference type="InParanoid" id="P14707"/>
<dbReference type="OrthoDB" id="3188901at2"/>
<dbReference type="PhylomeDB" id="P14707"/>
<dbReference type="Proteomes" id="UP000001973">
    <property type="component" value="Chromosome"/>
</dbReference>
<dbReference type="GO" id="GO:0003677">
    <property type="term" value="F:DNA binding"/>
    <property type="evidence" value="ECO:0007669"/>
    <property type="project" value="UniProtKB-KW"/>
</dbReference>
<dbReference type="GO" id="GO:0004803">
    <property type="term" value="F:transposase activity"/>
    <property type="evidence" value="ECO:0007669"/>
    <property type="project" value="InterPro"/>
</dbReference>
<dbReference type="GO" id="GO:0006313">
    <property type="term" value="P:DNA transposition"/>
    <property type="evidence" value="ECO:0007669"/>
    <property type="project" value="InterPro"/>
</dbReference>
<dbReference type="InterPro" id="IPR002525">
    <property type="entry name" value="Transp_IS110-like_N"/>
</dbReference>
<dbReference type="InterPro" id="IPR047650">
    <property type="entry name" value="Transpos_IS110"/>
</dbReference>
<dbReference type="InterPro" id="IPR003346">
    <property type="entry name" value="Transposase_20"/>
</dbReference>
<dbReference type="NCBIfam" id="NF033542">
    <property type="entry name" value="transpos_IS110"/>
    <property type="match status" value="1"/>
</dbReference>
<dbReference type="PANTHER" id="PTHR33055:SF3">
    <property type="entry name" value="PUTATIVE TRANSPOSASE FOR IS117-RELATED"/>
    <property type="match status" value="1"/>
</dbReference>
<dbReference type="PANTHER" id="PTHR33055">
    <property type="entry name" value="TRANSPOSASE FOR INSERTION SEQUENCE ELEMENT IS1111A"/>
    <property type="match status" value="1"/>
</dbReference>
<dbReference type="Pfam" id="PF01548">
    <property type="entry name" value="DEDD_Tnp_IS110"/>
    <property type="match status" value="1"/>
</dbReference>
<dbReference type="Pfam" id="PF02371">
    <property type="entry name" value="Transposase_20"/>
    <property type="match status" value="1"/>
</dbReference>
<gene>
    <name type="ordered locus">SCO1603</name>
    <name type="ORF">SCI35.25</name>
</gene>
<gene>
    <name type="ordered locus">SCO6400</name>
    <name type="ORF">SC3C8.19</name>
</gene>
<feature type="chain" id="PRO_0000075524" description="Mini-circle putative transposase for IS117">
    <location>
        <begin position="1"/>
        <end position="414"/>
    </location>
</feature>
<sequence>MWEDSLTVFCGIDWAERHHDVAIVDDTGTLLAKARITDDVAGYNKLLDLLAEHGDSSATPIPVAIETSHGLLVAALRTGSRKVFAINPLAAARYRDRHGVSRKKSDPGDALVLANILRTDMHAHRPLPADSELAQAITVLARAQQDAVWNRQQVANQVRSLLREYYPAALHAFQSKDGGLTRPDARVILTMAPTPAKAAKLTLAQLRAGLKRSGRTRAFNTEIERLRGIFRSEYARQLPAVEDAFGHQLLALLRQLDATCLAADDLAKAVEDAFREHADSEILLSFPGLGPLLGARVLAEIGDDRSRFTDARALKSYAGSAPITRASGRKHFVGRRFVKNNRLMNAGFLWAFAALQASPGANAHYRRRREHGDWHAAAQRHLLNRFLGQLHHCLQTRQHFDEQRAFAPLLQAAA</sequence>
<name>YM3_STRCO</name>
<keyword id="KW-0233">DNA recombination</keyword>
<keyword id="KW-0238">DNA-binding</keyword>
<keyword id="KW-1185">Reference proteome</keyword>
<keyword id="KW-0814">Transposable element</keyword>
<keyword id="KW-0815">Transposition</keyword>